<keyword id="KW-0131">Cell cycle</keyword>
<keyword id="KW-0132">Cell division</keyword>
<keyword id="KW-1003">Cell membrane</keyword>
<keyword id="KW-0133">Cell shape</keyword>
<keyword id="KW-0961">Cell wall biogenesis/degradation</keyword>
<keyword id="KW-0328">Glycosyltransferase</keyword>
<keyword id="KW-0472">Membrane</keyword>
<keyword id="KW-0573">Peptidoglycan synthesis</keyword>
<keyword id="KW-1185">Reference proteome</keyword>
<keyword id="KW-0808">Transferase</keyword>
<proteinExistence type="inferred from homology"/>
<organism>
    <name type="scientific">Clostridium tetani (strain Massachusetts / E88)</name>
    <dbReference type="NCBI Taxonomy" id="212717"/>
    <lineage>
        <taxon>Bacteria</taxon>
        <taxon>Bacillati</taxon>
        <taxon>Bacillota</taxon>
        <taxon>Clostridia</taxon>
        <taxon>Eubacteriales</taxon>
        <taxon>Clostridiaceae</taxon>
        <taxon>Clostridium</taxon>
    </lineage>
</organism>
<gene>
    <name evidence="1" type="primary">murG</name>
    <name type="ordered locus">CTC_01743</name>
</gene>
<protein>
    <recommendedName>
        <fullName evidence="1">UDP-N-acetylglucosamine--N-acetylmuramyl-(pentapeptide) pyrophosphoryl-undecaprenol N-acetylglucosamine transferase</fullName>
        <ecNumber evidence="1">2.4.1.227</ecNumber>
    </recommendedName>
    <alternativeName>
        <fullName evidence="1">Undecaprenyl-PP-MurNAc-pentapeptide-UDPGlcNAc GlcNAc transferase</fullName>
    </alternativeName>
</protein>
<dbReference type="EC" id="2.4.1.227" evidence="1"/>
<dbReference type="EMBL" id="AE015927">
    <property type="protein sequence ID" value="AAO36275.1"/>
    <property type="status" value="ALT_INIT"/>
    <property type="molecule type" value="Genomic_DNA"/>
</dbReference>
<dbReference type="RefSeq" id="WP_035109428.1">
    <property type="nucleotide sequence ID" value="NC_004557.1"/>
</dbReference>
<dbReference type="SMR" id="Q893R7"/>
<dbReference type="STRING" id="212717.CTC_01743"/>
<dbReference type="CAZy" id="GT28">
    <property type="family name" value="Glycosyltransferase Family 28"/>
</dbReference>
<dbReference type="GeneID" id="24253378"/>
<dbReference type="KEGG" id="ctc:CTC_01743"/>
<dbReference type="HOGENOM" id="CLU_037404_0_0_9"/>
<dbReference type="OrthoDB" id="9808936at2"/>
<dbReference type="UniPathway" id="UPA00219"/>
<dbReference type="Proteomes" id="UP000001412">
    <property type="component" value="Chromosome"/>
</dbReference>
<dbReference type="GO" id="GO:0005886">
    <property type="term" value="C:plasma membrane"/>
    <property type="evidence" value="ECO:0007669"/>
    <property type="project" value="UniProtKB-SubCell"/>
</dbReference>
<dbReference type="GO" id="GO:0051991">
    <property type="term" value="F:UDP-N-acetyl-D-glucosamine:N-acetylmuramoyl-L-alanyl-D-glutamyl-meso-2,6-diaminopimelyl-D-alanyl-D-alanine-diphosphoundecaprenol 4-beta-N-acetylglucosaminlytransferase activity"/>
    <property type="evidence" value="ECO:0007669"/>
    <property type="project" value="RHEA"/>
</dbReference>
<dbReference type="GO" id="GO:0050511">
    <property type="term" value="F:undecaprenyldiphospho-muramoylpentapeptide beta-N-acetylglucosaminyltransferase activity"/>
    <property type="evidence" value="ECO:0007669"/>
    <property type="project" value="UniProtKB-UniRule"/>
</dbReference>
<dbReference type="GO" id="GO:0005975">
    <property type="term" value="P:carbohydrate metabolic process"/>
    <property type="evidence" value="ECO:0007669"/>
    <property type="project" value="InterPro"/>
</dbReference>
<dbReference type="GO" id="GO:0051301">
    <property type="term" value="P:cell division"/>
    <property type="evidence" value="ECO:0007669"/>
    <property type="project" value="UniProtKB-KW"/>
</dbReference>
<dbReference type="GO" id="GO:0071555">
    <property type="term" value="P:cell wall organization"/>
    <property type="evidence" value="ECO:0007669"/>
    <property type="project" value="UniProtKB-KW"/>
</dbReference>
<dbReference type="GO" id="GO:0030259">
    <property type="term" value="P:lipid glycosylation"/>
    <property type="evidence" value="ECO:0007669"/>
    <property type="project" value="UniProtKB-UniRule"/>
</dbReference>
<dbReference type="GO" id="GO:0009252">
    <property type="term" value="P:peptidoglycan biosynthetic process"/>
    <property type="evidence" value="ECO:0007669"/>
    <property type="project" value="UniProtKB-UniRule"/>
</dbReference>
<dbReference type="GO" id="GO:0008360">
    <property type="term" value="P:regulation of cell shape"/>
    <property type="evidence" value="ECO:0007669"/>
    <property type="project" value="UniProtKB-KW"/>
</dbReference>
<dbReference type="CDD" id="cd03785">
    <property type="entry name" value="GT28_MurG"/>
    <property type="match status" value="1"/>
</dbReference>
<dbReference type="Gene3D" id="3.40.50.2000">
    <property type="entry name" value="Glycogen Phosphorylase B"/>
    <property type="match status" value="2"/>
</dbReference>
<dbReference type="HAMAP" id="MF_00033">
    <property type="entry name" value="MurG"/>
    <property type="match status" value="1"/>
</dbReference>
<dbReference type="InterPro" id="IPR006009">
    <property type="entry name" value="GlcNAc_MurG"/>
</dbReference>
<dbReference type="InterPro" id="IPR007235">
    <property type="entry name" value="Glyco_trans_28_C"/>
</dbReference>
<dbReference type="InterPro" id="IPR004276">
    <property type="entry name" value="GlycoTrans_28_N"/>
</dbReference>
<dbReference type="NCBIfam" id="TIGR01133">
    <property type="entry name" value="murG"/>
    <property type="match status" value="1"/>
</dbReference>
<dbReference type="NCBIfam" id="NF009102">
    <property type="entry name" value="PRK12446.1"/>
    <property type="match status" value="1"/>
</dbReference>
<dbReference type="PANTHER" id="PTHR21015:SF27">
    <property type="entry name" value="UDP-N-ACETYLGLUCOSAMINE--N-ACETYLMURAMYL-(PENTAPEPTIDE) PYROPHOSPHORYL-UNDECAPRENOL N-ACETYLGLUCOSAMINE TRANSFERASE"/>
    <property type="match status" value="1"/>
</dbReference>
<dbReference type="PANTHER" id="PTHR21015">
    <property type="entry name" value="UDP-N-ACETYLGLUCOSAMINE--N-ACETYLMURAMYL-(PENTAPEPTIDE) PYROPHOSPHORYL-UNDECAPRENOL N-ACETYLGLUCOSAMINE TRANSFERASE 1"/>
    <property type="match status" value="1"/>
</dbReference>
<dbReference type="Pfam" id="PF04101">
    <property type="entry name" value="Glyco_tran_28_C"/>
    <property type="match status" value="1"/>
</dbReference>
<dbReference type="Pfam" id="PF03033">
    <property type="entry name" value="Glyco_transf_28"/>
    <property type="match status" value="1"/>
</dbReference>
<dbReference type="SUPFAM" id="SSF53756">
    <property type="entry name" value="UDP-Glycosyltransferase/glycogen phosphorylase"/>
    <property type="match status" value="1"/>
</dbReference>
<name>MURG_CLOTE</name>
<sequence>MKKKIILTGGGTAGHVTPNISLIPKLKELGYEVQYIGTKDGIEKSLIKKEGIKYHEISSGKLRRYFDLKNFTDPFKVLKGIMEARKIIKKEKPNIVFSKGGFVAVPVVIGAYLNKVPVISHESDMTPGLANKLSTPYCNKVCVTFPETLKYIKKDKGVLTGTPIREELFLGNEEKGKKICGFKDNKPIVLLVGGSLGSKILNNLIRENIEELLKKFNIIHICGKGNIEKTLENKEGYAQFEYVKEELPHFMKASNIVISRAGANSIFELLALAKPNLLVPLSKKASRGDQILNAKSFEKNGYSLVLEEEELSKKIFLDKLNYLYENREKYIKNMKNSSFKNGIDNIIDLIEKYYTMKN</sequence>
<comment type="function">
    <text evidence="1">Cell wall formation. Catalyzes the transfer of a GlcNAc subunit on undecaprenyl-pyrophosphoryl-MurNAc-pentapeptide (lipid intermediate I) to form undecaprenyl-pyrophosphoryl-MurNAc-(pentapeptide)GlcNAc (lipid intermediate II).</text>
</comment>
<comment type="catalytic activity">
    <reaction evidence="1">
        <text>di-trans,octa-cis-undecaprenyl diphospho-N-acetyl-alpha-D-muramoyl-L-alanyl-D-glutamyl-meso-2,6-diaminopimeloyl-D-alanyl-D-alanine + UDP-N-acetyl-alpha-D-glucosamine = di-trans,octa-cis-undecaprenyl diphospho-[N-acetyl-alpha-D-glucosaminyl-(1-&gt;4)]-N-acetyl-alpha-D-muramoyl-L-alanyl-D-glutamyl-meso-2,6-diaminopimeloyl-D-alanyl-D-alanine + UDP + H(+)</text>
        <dbReference type="Rhea" id="RHEA:31227"/>
        <dbReference type="ChEBI" id="CHEBI:15378"/>
        <dbReference type="ChEBI" id="CHEBI:57705"/>
        <dbReference type="ChEBI" id="CHEBI:58223"/>
        <dbReference type="ChEBI" id="CHEBI:61387"/>
        <dbReference type="ChEBI" id="CHEBI:61388"/>
        <dbReference type="EC" id="2.4.1.227"/>
    </reaction>
</comment>
<comment type="pathway">
    <text evidence="1">Cell wall biogenesis; peptidoglycan biosynthesis.</text>
</comment>
<comment type="subcellular location">
    <subcellularLocation>
        <location evidence="1">Cell membrane</location>
        <topology evidence="1">Peripheral membrane protein</topology>
        <orientation evidence="1">Cytoplasmic side</orientation>
    </subcellularLocation>
</comment>
<comment type="similarity">
    <text evidence="1">Belongs to the glycosyltransferase 28 family. MurG subfamily.</text>
</comment>
<comment type="sequence caution" evidence="2">
    <conflict type="erroneous initiation">
        <sequence resource="EMBL-CDS" id="AAO36275"/>
    </conflict>
</comment>
<feature type="chain" id="PRO_0000109166" description="UDP-N-acetylglucosamine--N-acetylmuramyl-(pentapeptide) pyrophosphoryl-undecaprenol N-acetylglucosamine transferase">
    <location>
        <begin position="1"/>
        <end position="358"/>
    </location>
</feature>
<feature type="binding site" evidence="1">
    <location>
        <begin position="12"/>
        <end position="14"/>
    </location>
    <ligand>
        <name>UDP-N-acetyl-alpha-D-glucosamine</name>
        <dbReference type="ChEBI" id="CHEBI:57705"/>
    </ligand>
</feature>
<feature type="binding site" evidence="1">
    <location>
        <position position="165"/>
    </location>
    <ligand>
        <name>UDP-N-acetyl-alpha-D-glucosamine</name>
        <dbReference type="ChEBI" id="CHEBI:57705"/>
    </ligand>
</feature>
<feature type="binding site" evidence="1">
    <location>
        <position position="195"/>
    </location>
    <ligand>
        <name>UDP-N-acetyl-alpha-D-glucosamine</name>
        <dbReference type="ChEBI" id="CHEBI:57705"/>
    </ligand>
</feature>
<feature type="binding site" evidence="1">
    <location>
        <position position="290"/>
    </location>
    <ligand>
        <name>UDP-N-acetyl-alpha-D-glucosamine</name>
        <dbReference type="ChEBI" id="CHEBI:57705"/>
    </ligand>
</feature>
<reference key="1">
    <citation type="journal article" date="2003" name="Proc. Natl. Acad. Sci. U.S.A.">
        <title>The genome sequence of Clostridium tetani, the causative agent of tetanus disease.</title>
        <authorList>
            <person name="Brueggemann H."/>
            <person name="Baeumer S."/>
            <person name="Fricke W.F."/>
            <person name="Wiezer A."/>
            <person name="Liesegang H."/>
            <person name="Decker I."/>
            <person name="Herzberg C."/>
            <person name="Martinez-Arias R."/>
            <person name="Merkl R."/>
            <person name="Henne A."/>
            <person name="Gottschalk G."/>
        </authorList>
    </citation>
    <scope>NUCLEOTIDE SEQUENCE [LARGE SCALE GENOMIC DNA]</scope>
    <source>
        <strain>Massachusetts / E88</strain>
    </source>
</reference>
<evidence type="ECO:0000255" key="1">
    <source>
        <dbReference type="HAMAP-Rule" id="MF_00033"/>
    </source>
</evidence>
<evidence type="ECO:0000305" key="2"/>
<accession>Q893R7</accession>